<name>SYG_STAA2</name>
<dbReference type="EC" id="6.1.1.14" evidence="1"/>
<dbReference type="EMBL" id="CP000736">
    <property type="protein sequence ID" value="ABR52505.1"/>
    <property type="molecule type" value="Genomic_DNA"/>
</dbReference>
<dbReference type="SMR" id="A6U237"/>
<dbReference type="KEGG" id="sah:SaurJH1_1657"/>
<dbReference type="HOGENOM" id="CLU_015515_2_1_9"/>
<dbReference type="GO" id="GO:0005737">
    <property type="term" value="C:cytoplasm"/>
    <property type="evidence" value="ECO:0007669"/>
    <property type="project" value="UniProtKB-SubCell"/>
</dbReference>
<dbReference type="GO" id="GO:0005524">
    <property type="term" value="F:ATP binding"/>
    <property type="evidence" value="ECO:0007669"/>
    <property type="project" value="UniProtKB-UniRule"/>
</dbReference>
<dbReference type="GO" id="GO:0140096">
    <property type="term" value="F:catalytic activity, acting on a protein"/>
    <property type="evidence" value="ECO:0007669"/>
    <property type="project" value="UniProtKB-ARBA"/>
</dbReference>
<dbReference type="GO" id="GO:0004820">
    <property type="term" value="F:glycine-tRNA ligase activity"/>
    <property type="evidence" value="ECO:0000250"/>
    <property type="project" value="UniProtKB"/>
</dbReference>
<dbReference type="GO" id="GO:0046983">
    <property type="term" value="F:protein dimerization activity"/>
    <property type="evidence" value="ECO:0000250"/>
    <property type="project" value="UniProtKB"/>
</dbReference>
<dbReference type="GO" id="GO:0016740">
    <property type="term" value="F:transferase activity"/>
    <property type="evidence" value="ECO:0007669"/>
    <property type="project" value="UniProtKB-ARBA"/>
</dbReference>
<dbReference type="GO" id="GO:0006426">
    <property type="term" value="P:glycyl-tRNA aminoacylation"/>
    <property type="evidence" value="ECO:0007669"/>
    <property type="project" value="UniProtKB-UniRule"/>
</dbReference>
<dbReference type="CDD" id="cd00774">
    <property type="entry name" value="GlyRS-like_core"/>
    <property type="match status" value="1"/>
</dbReference>
<dbReference type="CDD" id="cd00858">
    <property type="entry name" value="GlyRS_anticodon"/>
    <property type="match status" value="1"/>
</dbReference>
<dbReference type="FunFam" id="3.40.50.800:FF:000002">
    <property type="entry name" value="Glycine--tRNA ligase"/>
    <property type="match status" value="1"/>
</dbReference>
<dbReference type="Gene3D" id="3.30.40.230">
    <property type="match status" value="1"/>
</dbReference>
<dbReference type="Gene3D" id="3.40.50.800">
    <property type="entry name" value="Anticodon-binding domain"/>
    <property type="match status" value="1"/>
</dbReference>
<dbReference type="Gene3D" id="3.30.930.10">
    <property type="entry name" value="Bira Bifunctional Protein, Domain 2"/>
    <property type="match status" value="1"/>
</dbReference>
<dbReference type="HAMAP" id="MF_00253_B">
    <property type="entry name" value="Gly_tRNA_synth_B"/>
    <property type="match status" value="1"/>
</dbReference>
<dbReference type="InterPro" id="IPR002314">
    <property type="entry name" value="aa-tRNA-synt_IIb"/>
</dbReference>
<dbReference type="InterPro" id="IPR006195">
    <property type="entry name" value="aa-tRNA-synth_II"/>
</dbReference>
<dbReference type="InterPro" id="IPR045864">
    <property type="entry name" value="aa-tRNA-synth_II/BPL/LPL"/>
</dbReference>
<dbReference type="InterPro" id="IPR004154">
    <property type="entry name" value="Anticodon-bd"/>
</dbReference>
<dbReference type="InterPro" id="IPR036621">
    <property type="entry name" value="Anticodon-bd_dom_sf"/>
</dbReference>
<dbReference type="InterPro" id="IPR027031">
    <property type="entry name" value="Gly-tRNA_synthase/POLG2"/>
</dbReference>
<dbReference type="InterPro" id="IPR022961">
    <property type="entry name" value="Gly_tRNA_ligase_bac"/>
</dbReference>
<dbReference type="InterPro" id="IPR033731">
    <property type="entry name" value="GlyRS-like_core"/>
</dbReference>
<dbReference type="InterPro" id="IPR002315">
    <property type="entry name" value="tRNA-synt_gly"/>
</dbReference>
<dbReference type="NCBIfam" id="TIGR00389">
    <property type="entry name" value="glyS_dimeric"/>
    <property type="match status" value="1"/>
</dbReference>
<dbReference type="NCBIfam" id="NF003211">
    <property type="entry name" value="PRK04173.1"/>
    <property type="match status" value="1"/>
</dbReference>
<dbReference type="PANTHER" id="PTHR10745:SF8">
    <property type="entry name" value="DNA POLYMERASE SUBUNIT GAMMA-2, MITOCHONDRIAL"/>
    <property type="match status" value="1"/>
</dbReference>
<dbReference type="PANTHER" id="PTHR10745">
    <property type="entry name" value="GLYCYL-TRNA SYNTHETASE/DNA POLYMERASE SUBUNIT GAMMA-2"/>
    <property type="match status" value="1"/>
</dbReference>
<dbReference type="Pfam" id="PF03129">
    <property type="entry name" value="HGTP_anticodon"/>
    <property type="match status" value="1"/>
</dbReference>
<dbReference type="Pfam" id="PF00587">
    <property type="entry name" value="tRNA-synt_2b"/>
    <property type="match status" value="1"/>
</dbReference>
<dbReference type="PRINTS" id="PR01043">
    <property type="entry name" value="TRNASYNTHGLY"/>
</dbReference>
<dbReference type="SUPFAM" id="SSF52954">
    <property type="entry name" value="Class II aaRS ABD-related"/>
    <property type="match status" value="1"/>
</dbReference>
<dbReference type="SUPFAM" id="SSF55681">
    <property type="entry name" value="Class II aaRS and biotin synthetases"/>
    <property type="match status" value="1"/>
</dbReference>
<dbReference type="PROSITE" id="PS50862">
    <property type="entry name" value="AA_TRNA_LIGASE_II"/>
    <property type="match status" value="1"/>
</dbReference>
<feature type="chain" id="PRO_1000078516" description="Glycine--tRNA ligase">
    <location>
        <begin position="1"/>
        <end position="463"/>
    </location>
</feature>
<feature type="binding site" evidence="1">
    <location>
        <position position="98"/>
    </location>
    <ligand>
        <name>substrate</name>
    </ligand>
</feature>
<feature type="binding site" evidence="1">
    <location>
        <position position="174"/>
    </location>
    <ligand>
        <name>substrate</name>
    </ligand>
</feature>
<feature type="binding site" evidence="1">
    <location>
        <begin position="206"/>
        <end position="208"/>
    </location>
    <ligand>
        <name>ATP</name>
        <dbReference type="ChEBI" id="CHEBI:30616"/>
    </ligand>
</feature>
<feature type="binding site" evidence="1">
    <location>
        <begin position="216"/>
        <end position="221"/>
    </location>
    <ligand>
        <name>ATP</name>
        <dbReference type="ChEBI" id="CHEBI:30616"/>
    </ligand>
</feature>
<feature type="binding site" evidence="1">
    <location>
        <begin position="221"/>
        <end position="225"/>
    </location>
    <ligand>
        <name>substrate</name>
    </ligand>
</feature>
<feature type="binding site" evidence="1">
    <location>
        <begin position="290"/>
        <end position="291"/>
    </location>
    <ligand>
        <name>ATP</name>
        <dbReference type="ChEBI" id="CHEBI:30616"/>
    </ligand>
</feature>
<feature type="binding site" evidence="1">
    <location>
        <begin position="330"/>
        <end position="334"/>
    </location>
    <ligand>
        <name>substrate</name>
    </ligand>
</feature>
<feature type="binding site" evidence="1">
    <location>
        <begin position="334"/>
        <end position="337"/>
    </location>
    <ligand>
        <name>ATP</name>
        <dbReference type="ChEBI" id="CHEBI:30616"/>
    </ligand>
</feature>
<keyword id="KW-0030">Aminoacyl-tRNA synthetase</keyword>
<keyword id="KW-0067">ATP-binding</keyword>
<keyword id="KW-0963">Cytoplasm</keyword>
<keyword id="KW-0436">Ligase</keyword>
<keyword id="KW-0547">Nucleotide-binding</keyword>
<keyword id="KW-0648">Protein biosynthesis</keyword>
<accession>A6U237</accession>
<reference key="1">
    <citation type="submission" date="2007-06" db="EMBL/GenBank/DDBJ databases">
        <title>Complete sequence of chromosome of Staphylococcus aureus subsp. aureus JH1.</title>
        <authorList>
            <consortium name="US DOE Joint Genome Institute"/>
            <person name="Copeland A."/>
            <person name="Lucas S."/>
            <person name="Lapidus A."/>
            <person name="Barry K."/>
            <person name="Detter J.C."/>
            <person name="Glavina del Rio T."/>
            <person name="Hammon N."/>
            <person name="Israni S."/>
            <person name="Dalin E."/>
            <person name="Tice H."/>
            <person name="Pitluck S."/>
            <person name="Chain P."/>
            <person name="Malfatti S."/>
            <person name="Shin M."/>
            <person name="Vergez L."/>
            <person name="Schmutz J."/>
            <person name="Larimer F."/>
            <person name="Land M."/>
            <person name="Hauser L."/>
            <person name="Kyrpides N."/>
            <person name="Ivanova N."/>
            <person name="Tomasz A."/>
            <person name="Richardson P."/>
        </authorList>
    </citation>
    <scope>NUCLEOTIDE SEQUENCE [LARGE SCALE GENOMIC DNA]</scope>
    <source>
        <strain>JH1</strain>
    </source>
</reference>
<gene>
    <name evidence="1" type="primary">glyQS</name>
    <name type="ordered locus">SaurJH1_1657</name>
</gene>
<comment type="function">
    <text evidence="1">Catalyzes the attachment of glycine to tRNA(Gly).</text>
</comment>
<comment type="catalytic activity">
    <reaction evidence="1">
        <text>tRNA(Gly) + glycine + ATP = glycyl-tRNA(Gly) + AMP + diphosphate</text>
        <dbReference type="Rhea" id="RHEA:16013"/>
        <dbReference type="Rhea" id="RHEA-COMP:9664"/>
        <dbReference type="Rhea" id="RHEA-COMP:9683"/>
        <dbReference type="ChEBI" id="CHEBI:30616"/>
        <dbReference type="ChEBI" id="CHEBI:33019"/>
        <dbReference type="ChEBI" id="CHEBI:57305"/>
        <dbReference type="ChEBI" id="CHEBI:78442"/>
        <dbReference type="ChEBI" id="CHEBI:78522"/>
        <dbReference type="ChEBI" id="CHEBI:456215"/>
        <dbReference type="EC" id="6.1.1.14"/>
    </reaction>
</comment>
<comment type="subunit">
    <text evidence="1">Homodimer.</text>
</comment>
<comment type="subcellular location">
    <subcellularLocation>
        <location evidence="1">Cytoplasm</location>
    </subcellularLocation>
</comment>
<comment type="similarity">
    <text evidence="1">Belongs to the class-II aminoacyl-tRNA synthetase family.</text>
</comment>
<protein>
    <recommendedName>
        <fullName evidence="1">Glycine--tRNA ligase</fullName>
        <ecNumber evidence="1">6.1.1.14</ecNumber>
    </recommendedName>
    <alternativeName>
        <fullName evidence="1">Glycyl-tRNA synthetase</fullName>
        <shortName evidence="1">GlyRS</shortName>
    </alternativeName>
</protein>
<proteinExistence type="inferred from homology"/>
<evidence type="ECO:0000255" key="1">
    <source>
        <dbReference type="HAMAP-Rule" id="MF_00253"/>
    </source>
</evidence>
<organism>
    <name type="scientific">Staphylococcus aureus (strain JH1)</name>
    <dbReference type="NCBI Taxonomy" id="359787"/>
    <lineage>
        <taxon>Bacteria</taxon>
        <taxon>Bacillati</taxon>
        <taxon>Bacillota</taxon>
        <taxon>Bacilli</taxon>
        <taxon>Bacillales</taxon>
        <taxon>Staphylococcaceae</taxon>
        <taxon>Staphylococcus</taxon>
    </lineage>
</organism>
<sequence>MAKDMDTIVSLAKHRGFVFPGSDIYGGLSNTWDYGPLGVELKNNVKKAWWQKFITQSPFNVGIDAAILMNPKVWEASGHLNNFNDPMIDNKDSKIRYRADKLIEDYMQDVKGDENFIADGLSFEQMKKIIDDEGIVCPVSKTANWTEIRQFNLMFKTFQGVTEDSTNEIFLRPETAQGIFVNYKNVQRSMRKKLPFGIGQIGKSFRNEITPGNFIFRTREFEQMELEFFCKPGEEIEWQNYWKTFASDWLTSLNMSSENMRLRDHDEDELSHYSNATTDIEYKFPFGWGELWGIASRTDFDLRKHAEHSGEDFRYHDPETNEKYIPYCIEPSLGADRVTLAFLCDAYDEEGVEGSKDARTVLHFHPALAPYKAAILPLSKKLSGEAIKIFEQLSSKFSIDFDESQSIGKRYRRQDEIGTPYCVTFDFDSLEDNQVTVRDRDSMEQVRMPISELEAFLTEKTKF</sequence>